<protein>
    <recommendedName>
        <fullName>Ras-related protein RABA5a</fullName>
        <shortName>AtRABA5a</shortName>
    </recommendedName>
</protein>
<sequence length="221" mass="24445">MAFYSEDDKSEDYLFKIVLIGDSAVGKSNLLARFARDEFYPNSKSTIGVEFQTQKMDINGKEIKAQIWDTAGQERFRAVTSAYYRGAVGALLVYDISRRQTFHSIGRWLNELHTHSDMNVVTILVGNKSDLKDLREVSTAEGKALAEAQGLFFMETSALDSSNVAAAFETVVKEIYNILSRKVMSSQELNKQDPASLSNGKKVVIPSDGQGEFKKGGCCSS</sequence>
<comment type="function">
    <text evidence="1">Intracellular vesicle trafficking and protein transport.</text>
</comment>
<comment type="subcellular location">
    <subcellularLocation>
        <location evidence="2">Cell membrane</location>
        <topology evidence="3">Lipid-anchor</topology>
        <orientation evidence="3">Cytoplasmic side</orientation>
    </subcellularLocation>
</comment>
<comment type="similarity">
    <text evidence="3">Belongs to the small GTPase superfamily. Rab family.</text>
</comment>
<feature type="chain" id="PRO_0000407349" description="Ras-related protein RABA5a">
    <location>
        <begin position="1"/>
        <end position="221"/>
    </location>
</feature>
<feature type="short sequence motif" description="Effector region" evidence="1">
    <location>
        <begin position="43"/>
        <end position="51"/>
    </location>
</feature>
<feature type="binding site" evidence="1">
    <location>
        <begin position="21"/>
        <end position="28"/>
    </location>
    <ligand>
        <name>GTP</name>
        <dbReference type="ChEBI" id="CHEBI:37565"/>
    </ligand>
</feature>
<feature type="binding site" evidence="1">
    <location>
        <begin position="69"/>
        <end position="73"/>
    </location>
    <ligand>
        <name>GTP</name>
        <dbReference type="ChEBI" id="CHEBI:37565"/>
    </ligand>
</feature>
<feature type="binding site" evidence="1">
    <location>
        <begin position="127"/>
        <end position="130"/>
    </location>
    <ligand>
        <name>GTP</name>
        <dbReference type="ChEBI" id="CHEBI:37565"/>
    </ligand>
</feature>
<feature type="binding site" evidence="1">
    <location>
        <begin position="157"/>
        <end position="158"/>
    </location>
    <ligand>
        <name>GTP</name>
        <dbReference type="ChEBI" id="CHEBI:37565"/>
    </ligand>
</feature>
<feature type="lipid moiety-binding region" description="S-geranylgeranyl cysteine" evidence="1">
    <location>
        <position position="218"/>
    </location>
</feature>
<feature type="lipid moiety-binding region" description="S-geranylgeranyl cysteine" evidence="1">
    <location>
        <position position="219"/>
    </location>
</feature>
<name>RAA5A_ARATH</name>
<evidence type="ECO:0000250" key="1"/>
<evidence type="ECO:0000269" key="2">
    <source>
    </source>
</evidence>
<evidence type="ECO:0000305" key="3"/>
<proteinExistence type="evidence at protein level"/>
<reference key="1">
    <citation type="submission" date="1999-04" db="EMBL/GenBank/DDBJ databases">
        <title>Structural analysis of Arabidopsis thaliana chromosome 5. XI.</title>
        <authorList>
            <person name="Kaneko T."/>
            <person name="Katoh T."/>
            <person name="Asamizu E."/>
            <person name="Sato S."/>
            <person name="Nakamura Y."/>
            <person name="Kotani H."/>
            <person name="Tabata S."/>
        </authorList>
    </citation>
    <scope>NUCLEOTIDE SEQUENCE [LARGE SCALE GENOMIC DNA]</scope>
    <source>
        <strain>cv. Columbia</strain>
    </source>
</reference>
<reference key="2">
    <citation type="journal article" date="2017" name="Plant J.">
        <title>Araport11: a complete reannotation of the Arabidopsis thaliana reference genome.</title>
        <authorList>
            <person name="Cheng C.Y."/>
            <person name="Krishnakumar V."/>
            <person name="Chan A.P."/>
            <person name="Thibaud-Nissen F."/>
            <person name="Schobel S."/>
            <person name="Town C.D."/>
        </authorList>
    </citation>
    <scope>GENOME REANNOTATION</scope>
    <source>
        <strain>cv. Columbia</strain>
    </source>
</reference>
<reference key="3">
    <citation type="journal article" date="2003" name="Science">
        <title>Empirical analysis of transcriptional activity in the Arabidopsis genome.</title>
        <authorList>
            <person name="Yamada K."/>
            <person name="Lim J."/>
            <person name="Dale J.M."/>
            <person name="Chen H."/>
            <person name="Shinn P."/>
            <person name="Palm C.J."/>
            <person name="Southwick A.M."/>
            <person name="Wu H.C."/>
            <person name="Kim C.J."/>
            <person name="Nguyen M."/>
            <person name="Pham P.K."/>
            <person name="Cheuk R.F."/>
            <person name="Karlin-Newmann G."/>
            <person name="Liu S.X."/>
            <person name="Lam B."/>
            <person name="Sakano H."/>
            <person name="Wu T."/>
            <person name="Yu G."/>
            <person name="Miranda M."/>
            <person name="Quach H.L."/>
            <person name="Tripp M."/>
            <person name="Chang C.H."/>
            <person name="Lee J.M."/>
            <person name="Toriumi M.J."/>
            <person name="Chan M.M."/>
            <person name="Tang C.C."/>
            <person name="Onodera C.S."/>
            <person name="Deng J.M."/>
            <person name="Akiyama K."/>
            <person name="Ansari Y."/>
            <person name="Arakawa T."/>
            <person name="Banh J."/>
            <person name="Banno F."/>
            <person name="Bowser L."/>
            <person name="Brooks S.Y."/>
            <person name="Carninci P."/>
            <person name="Chao Q."/>
            <person name="Choy N."/>
            <person name="Enju A."/>
            <person name="Goldsmith A.D."/>
            <person name="Gurjal M."/>
            <person name="Hansen N.F."/>
            <person name="Hayashizaki Y."/>
            <person name="Johnson-Hopson C."/>
            <person name="Hsuan V.W."/>
            <person name="Iida K."/>
            <person name="Karnes M."/>
            <person name="Khan S."/>
            <person name="Koesema E."/>
            <person name="Ishida J."/>
            <person name="Jiang P.X."/>
            <person name="Jones T."/>
            <person name="Kawai J."/>
            <person name="Kamiya A."/>
            <person name="Meyers C."/>
            <person name="Nakajima M."/>
            <person name="Narusaka M."/>
            <person name="Seki M."/>
            <person name="Sakurai T."/>
            <person name="Satou M."/>
            <person name="Tamse R."/>
            <person name="Vaysberg M."/>
            <person name="Wallender E.K."/>
            <person name="Wong C."/>
            <person name="Yamamura Y."/>
            <person name="Yuan S."/>
            <person name="Shinozaki K."/>
            <person name="Davis R.W."/>
            <person name="Theologis A."/>
            <person name="Ecker J.R."/>
        </authorList>
    </citation>
    <scope>NUCLEOTIDE SEQUENCE [LARGE SCALE MRNA]</scope>
    <source>
        <strain>cv. Columbia</strain>
    </source>
</reference>
<reference key="4">
    <citation type="submission" date="2006-07" db="EMBL/GenBank/DDBJ databases">
        <title>Large-scale analysis of RIKEN Arabidopsis full-length (RAFL) cDNAs.</title>
        <authorList>
            <person name="Totoki Y."/>
            <person name="Seki M."/>
            <person name="Ishida J."/>
            <person name="Nakajima M."/>
            <person name="Enju A."/>
            <person name="Kamiya A."/>
            <person name="Narusaka M."/>
            <person name="Shin-i T."/>
            <person name="Nakagawa M."/>
            <person name="Sakamoto N."/>
            <person name="Oishi K."/>
            <person name="Kohara Y."/>
            <person name="Kobayashi M."/>
            <person name="Toyoda A."/>
            <person name="Sakaki Y."/>
            <person name="Sakurai T."/>
            <person name="Iida K."/>
            <person name="Akiyama K."/>
            <person name="Satou M."/>
            <person name="Toyoda T."/>
            <person name="Konagaya A."/>
            <person name="Carninci P."/>
            <person name="Kawai J."/>
            <person name="Hayashizaki Y."/>
            <person name="Shinozaki K."/>
        </authorList>
    </citation>
    <scope>NUCLEOTIDE SEQUENCE [LARGE SCALE MRNA]</scope>
    <source>
        <strain>cv. Columbia</strain>
    </source>
</reference>
<reference key="5">
    <citation type="journal article" date="2003" name="Plant Physiol.">
        <title>Analysis of the small GTPase gene superfamily of Arabidopsis.</title>
        <authorList>
            <person name="Vernoud V."/>
            <person name="Horton A.C."/>
            <person name="Yang Z."/>
            <person name="Nielsen E."/>
        </authorList>
    </citation>
    <scope>GENE FAMILY</scope>
    <scope>NOMENCLATURE</scope>
</reference>
<reference key="6">
    <citation type="journal article" date="2004" name="Mol. Cell. Proteomics">
        <title>Identification of new intrinsic proteins in Arabidopsis plasma membrane proteome.</title>
        <authorList>
            <person name="Marmagne A."/>
            <person name="Rouet M.-A."/>
            <person name="Ferro M."/>
            <person name="Rolland N."/>
            <person name="Alcon C."/>
            <person name="Joyard J."/>
            <person name="Garin J."/>
            <person name="Barbier-Brygoo H."/>
            <person name="Ephritikhine G."/>
        </authorList>
    </citation>
    <scope>IDENTIFICATION BY MASS SPECTROMETRY</scope>
    <scope>SUBCELLULAR LOCATION [LARGE SCALE ANALYSIS]</scope>
</reference>
<dbReference type="EMBL" id="AB025628">
    <property type="protein sequence ID" value="BAB09078.1"/>
    <property type="molecule type" value="Genomic_DNA"/>
</dbReference>
<dbReference type="EMBL" id="CP002688">
    <property type="protein sequence ID" value="AED95528.1"/>
    <property type="molecule type" value="Genomic_DNA"/>
</dbReference>
<dbReference type="EMBL" id="BT004809">
    <property type="protein sequence ID" value="AAO44075.1"/>
    <property type="molecule type" value="mRNA"/>
</dbReference>
<dbReference type="EMBL" id="AK222160">
    <property type="protein sequence ID" value="BAD95258.1"/>
    <property type="molecule type" value="mRNA"/>
</dbReference>
<dbReference type="EMBL" id="AK227772">
    <property type="protein sequence ID" value="BAE99754.1"/>
    <property type="molecule type" value="mRNA"/>
</dbReference>
<dbReference type="RefSeq" id="NP_199563.1">
    <property type="nucleotide sequence ID" value="NM_124125.4"/>
</dbReference>
<dbReference type="SMR" id="Q9FGK5"/>
<dbReference type="BioGRID" id="20050">
    <property type="interactions" value="2"/>
</dbReference>
<dbReference type="FunCoup" id="Q9FGK5">
    <property type="interactions" value="658"/>
</dbReference>
<dbReference type="IntAct" id="Q9FGK5">
    <property type="interactions" value="2"/>
</dbReference>
<dbReference type="STRING" id="3702.Q9FGK5"/>
<dbReference type="iPTMnet" id="Q9FGK5"/>
<dbReference type="PaxDb" id="3702-AT5G47520.1"/>
<dbReference type="ProteomicsDB" id="236624"/>
<dbReference type="EnsemblPlants" id="AT5G47520.1">
    <property type="protein sequence ID" value="AT5G47520.1"/>
    <property type="gene ID" value="AT5G47520"/>
</dbReference>
<dbReference type="GeneID" id="834802"/>
<dbReference type="Gramene" id="AT5G47520.1">
    <property type="protein sequence ID" value="AT5G47520.1"/>
    <property type="gene ID" value="AT5G47520"/>
</dbReference>
<dbReference type="KEGG" id="ath:AT5G47520"/>
<dbReference type="Araport" id="AT5G47520"/>
<dbReference type="TAIR" id="AT5G47520">
    <property type="gene designation" value="RABA5A"/>
</dbReference>
<dbReference type="eggNOG" id="KOG0087">
    <property type="taxonomic scope" value="Eukaryota"/>
</dbReference>
<dbReference type="HOGENOM" id="CLU_041217_23_0_1"/>
<dbReference type="InParanoid" id="Q9FGK5"/>
<dbReference type="OMA" id="MICYDIT"/>
<dbReference type="PhylomeDB" id="Q9FGK5"/>
<dbReference type="PRO" id="PR:Q9FGK5"/>
<dbReference type="Proteomes" id="UP000006548">
    <property type="component" value="Chromosome 5"/>
</dbReference>
<dbReference type="ExpressionAtlas" id="Q9FGK5">
    <property type="expression patterns" value="baseline and differential"/>
</dbReference>
<dbReference type="GO" id="GO:0000325">
    <property type="term" value="C:plant-type vacuole"/>
    <property type="evidence" value="ECO:0007005"/>
    <property type="project" value="TAIR"/>
</dbReference>
<dbReference type="GO" id="GO:0005886">
    <property type="term" value="C:plasma membrane"/>
    <property type="evidence" value="ECO:0007005"/>
    <property type="project" value="TAIR"/>
</dbReference>
<dbReference type="GO" id="GO:0009536">
    <property type="term" value="C:plastid"/>
    <property type="evidence" value="ECO:0007005"/>
    <property type="project" value="TAIR"/>
</dbReference>
<dbReference type="GO" id="GO:0005525">
    <property type="term" value="F:GTP binding"/>
    <property type="evidence" value="ECO:0007669"/>
    <property type="project" value="UniProtKB-KW"/>
</dbReference>
<dbReference type="GO" id="GO:0003924">
    <property type="term" value="F:GTPase activity"/>
    <property type="evidence" value="ECO:0007669"/>
    <property type="project" value="InterPro"/>
</dbReference>
<dbReference type="GO" id="GO:0015031">
    <property type="term" value="P:protein transport"/>
    <property type="evidence" value="ECO:0007669"/>
    <property type="project" value="UniProtKB-KW"/>
</dbReference>
<dbReference type="CDD" id="cd01868">
    <property type="entry name" value="Rab11_like"/>
    <property type="match status" value="1"/>
</dbReference>
<dbReference type="FunFam" id="3.40.50.300:FF:000274">
    <property type="entry name" value="ras-related protein RABA5a"/>
    <property type="match status" value="1"/>
</dbReference>
<dbReference type="Gene3D" id="3.40.50.300">
    <property type="entry name" value="P-loop containing nucleotide triphosphate hydrolases"/>
    <property type="match status" value="1"/>
</dbReference>
<dbReference type="InterPro" id="IPR027417">
    <property type="entry name" value="P-loop_NTPase"/>
</dbReference>
<dbReference type="InterPro" id="IPR050209">
    <property type="entry name" value="Rab_GTPases_membrane_traffic"/>
</dbReference>
<dbReference type="InterPro" id="IPR005225">
    <property type="entry name" value="Small_GTP-bd"/>
</dbReference>
<dbReference type="InterPro" id="IPR001806">
    <property type="entry name" value="Small_GTPase"/>
</dbReference>
<dbReference type="NCBIfam" id="TIGR00231">
    <property type="entry name" value="small_GTP"/>
    <property type="match status" value="1"/>
</dbReference>
<dbReference type="PANTHER" id="PTHR47979">
    <property type="entry name" value="DRAB11-RELATED"/>
    <property type="match status" value="1"/>
</dbReference>
<dbReference type="Pfam" id="PF00071">
    <property type="entry name" value="Ras"/>
    <property type="match status" value="1"/>
</dbReference>
<dbReference type="PRINTS" id="PR00449">
    <property type="entry name" value="RASTRNSFRMNG"/>
</dbReference>
<dbReference type="SMART" id="SM00175">
    <property type="entry name" value="RAB"/>
    <property type="match status" value="1"/>
</dbReference>
<dbReference type="SMART" id="SM00176">
    <property type="entry name" value="RAN"/>
    <property type="match status" value="1"/>
</dbReference>
<dbReference type="SMART" id="SM00173">
    <property type="entry name" value="RAS"/>
    <property type="match status" value="1"/>
</dbReference>
<dbReference type="SMART" id="SM00174">
    <property type="entry name" value="RHO"/>
    <property type="match status" value="1"/>
</dbReference>
<dbReference type="SUPFAM" id="SSF52540">
    <property type="entry name" value="P-loop containing nucleoside triphosphate hydrolases"/>
    <property type="match status" value="1"/>
</dbReference>
<dbReference type="PROSITE" id="PS51419">
    <property type="entry name" value="RAB"/>
    <property type="match status" value="1"/>
</dbReference>
<accession>Q9FGK5</accession>
<gene>
    <name type="primary">RABA5A</name>
    <name type="ordered locus">At5g47520</name>
    <name type="ORF">MNJ7.11</name>
</gene>
<keyword id="KW-1003">Cell membrane</keyword>
<keyword id="KW-0342">GTP-binding</keyword>
<keyword id="KW-0449">Lipoprotein</keyword>
<keyword id="KW-0472">Membrane</keyword>
<keyword id="KW-0547">Nucleotide-binding</keyword>
<keyword id="KW-0636">Prenylation</keyword>
<keyword id="KW-0653">Protein transport</keyword>
<keyword id="KW-1185">Reference proteome</keyword>
<keyword id="KW-0813">Transport</keyword>
<organism>
    <name type="scientific">Arabidopsis thaliana</name>
    <name type="common">Mouse-ear cress</name>
    <dbReference type="NCBI Taxonomy" id="3702"/>
    <lineage>
        <taxon>Eukaryota</taxon>
        <taxon>Viridiplantae</taxon>
        <taxon>Streptophyta</taxon>
        <taxon>Embryophyta</taxon>
        <taxon>Tracheophyta</taxon>
        <taxon>Spermatophyta</taxon>
        <taxon>Magnoliopsida</taxon>
        <taxon>eudicotyledons</taxon>
        <taxon>Gunneridae</taxon>
        <taxon>Pentapetalae</taxon>
        <taxon>rosids</taxon>
        <taxon>malvids</taxon>
        <taxon>Brassicales</taxon>
        <taxon>Brassicaceae</taxon>
        <taxon>Camelineae</taxon>
        <taxon>Arabidopsis</taxon>
    </lineage>
</organism>